<gene>
    <name evidence="1" type="primary">nuoA</name>
    <name type="ordered locus">Rv3145</name>
    <name type="ORF">MTCY03A2.13c</name>
</gene>
<dbReference type="EC" id="7.1.1.-" evidence="1"/>
<dbReference type="EMBL" id="AL123456">
    <property type="protein sequence ID" value="CCP45956.1"/>
    <property type="molecule type" value="Genomic_DNA"/>
</dbReference>
<dbReference type="PIR" id="B70647">
    <property type="entry name" value="B70647"/>
</dbReference>
<dbReference type="RefSeq" id="NP_217661.1">
    <property type="nucleotide sequence ID" value="NC_000962.3"/>
</dbReference>
<dbReference type="RefSeq" id="WP_003416417.1">
    <property type="nucleotide sequence ID" value="NZ_NVQJ01000019.1"/>
</dbReference>
<dbReference type="SMR" id="P9WIW7"/>
<dbReference type="FunCoup" id="P9WIW7">
    <property type="interactions" value="77"/>
</dbReference>
<dbReference type="STRING" id="83332.Rv3145"/>
<dbReference type="PaxDb" id="83332-Rv3145"/>
<dbReference type="DNASU" id="887397"/>
<dbReference type="GeneID" id="887397"/>
<dbReference type="KEGG" id="mtu:Rv3145"/>
<dbReference type="KEGG" id="mtv:RVBD_3145"/>
<dbReference type="TubercuList" id="Rv3145"/>
<dbReference type="eggNOG" id="COG0838">
    <property type="taxonomic scope" value="Bacteria"/>
</dbReference>
<dbReference type="InParanoid" id="P9WIW7"/>
<dbReference type="OrthoDB" id="9791970at2"/>
<dbReference type="PhylomeDB" id="P9WIW7"/>
<dbReference type="Proteomes" id="UP000001584">
    <property type="component" value="Chromosome"/>
</dbReference>
<dbReference type="GO" id="GO:0030964">
    <property type="term" value="C:NADH dehydrogenase complex"/>
    <property type="evidence" value="ECO:0000318"/>
    <property type="project" value="GO_Central"/>
</dbReference>
<dbReference type="GO" id="GO:0005886">
    <property type="term" value="C:plasma membrane"/>
    <property type="evidence" value="ECO:0007669"/>
    <property type="project" value="UniProtKB-SubCell"/>
</dbReference>
<dbReference type="GO" id="GO:0008137">
    <property type="term" value="F:NADH dehydrogenase (ubiquinone) activity"/>
    <property type="evidence" value="ECO:0000318"/>
    <property type="project" value="GO_Central"/>
</dbReference>
<dbReference type="GO" id="GO:0050136">
    <property type="term" value="F:NADH:ubiquinone reductase (non-electrogenic) activity"/>
    <property type="evidence" value="ECO:0007669"/>
    <property type="project" value="UniProtKB-UniRule"/>
</dbReference>
<dbReference type="GO" id="GO:0048038">
    <property type="term" value="F:quinone binding"/>
    <property type="evidence" value="ECO:0007669"/>
    <property type="project" value="UniProtKB-KW"/>
</dbReference>
<dbReference type="FunFam" id="1.20.58.1610:FF:000002">
    <property type="entry name" value="NADH-quinone oxidoreductase subunit A"/>
    <property type="match status" value="1"/>
</dbReference>
<dbReference type="Gene3D" id="1.20.58.1610">
    <property type="entry name" value="NADH:ubiquinone/plastoquinone oxidoreductase, chain 3"/>
    <property type="match status" value="1"/>
</dbReference>
<dbReference type="HAMAP" id="MF_01394">
    <property type="entry name" value="NDH1_NuoA"/>
    <property type="match status" value="1"/>
</dbReference>
<dbReference type="InterPro" id="IPR023043">
    <property type="entry name" value="NAD(P)H_OxRDtase_bac/plastid"/>
</dbReference>
<dbReference type="InterPro" id="IPR000440">
    <property type="entry name" value="NADH_UbQ/plastoQ_OxRdtase_su3"/>
</dbReference>
<dbReference type="InterPro" id="IPR038430">
    <property type="entry name" value="NDAH_ubi_oxred_su3_sf"/>
</dbReference>
<dbReference type="NCBIfam" id="NF005922">
    <property type="entry name" value="PRK07928.1"/>
    <property type="match status" value="1"/>
</dbReference>
<dbReference type="PANTHER" id="PTHR11058:SF22">
    <property type="entry name" value="NADH-QUINONE OXIDOREDUCTASE SUBUNIT A"/>
    <property type="match status" value="1"/>
</dbReference>
<dbReference type="PANTHER" id="PTHR11058">
    <property type="entry name" value="NADH-UBIQUINONE OXIDOREDUCTASE CHAIN 3"/>
    <property type="match status" value="1"/>
</dbReference>
<dbReference type="Pfam" id="PF00507">
    <property type="entry name" value="Oxidored_q4"/>
    <property type="match status" value="1"/>
</dbReference>
<evidence type="ECO:0000255" key="1">
    <source>
        <dbReference type="HAMAP-Rule" id="MF_01394"/>
    </source>
</evidence>
<sequence>MNVYIPILVLAALAAAFAVVSVVIASLVGPSRFNRSKQAAYECGIEPASTGARTSIGPGAASGQRFPIKYYLTAMLFIVFDIEIVFLYPWAVSYDSLGTFALVEMAIFMLTVFVAYAYVWRRGGLTWD</sequence>
<feature type="chain" id="PRO_0000117870" description="NADH-quinone oxidoreductase subunit A">
    <location>
        <begin position="1"/>
        <end position="128"/>
    </location>
</feature>
<feature type="transmembrane region" description="Helical" evidence="1">
    <location>
        <begin position="5"/>
        <end position="25"/>
    </location>
</feature>
<feature type="transmembrane region" description="Helical" evidence="1">
    <location>
        <begin position="72"/>
        <end position="92"/>
    </location>
</feature>
<feature type="transmembrane region" description="Helical" evidence="1">
    <location>
        <begin position="100"/>
        <end position="120"/>
    </location>
</feature>
<reference key="1">
    <citation type="journal article" date="1998" name="Nature">
        <title>Deciphering the biology of Mycobacterium tuberculosis from the complete genome sequence.</title>
        <authorList>
            <person name="Cole S.T."/>
            <person name="Brosch R."/>
            <person name="Parkhill J."/>
            <person name="Garnier T."/>
            <person name="Churcher C.M."/>
            <person name="Harris D.E."/>
            <person name="Gordon S.V."/>
            <person name="Eiglmeier K."/>
            <person name="Gas S."/>
            <person name="Barry C.E. III"/>
            <person name="Tekaia F."/>
            <person name="Badcock K."/>
            <person name="Basham D."/>
            <person name="Brown D."/>
            <person name="Chillingworth T."/>
            <person name="Connor R."/>
            <person name="Davies R.M."/>
            <person name="Devlin K."/>
            <person name="Feltwell T."/>
            <person name="Gentles S."/>
            <person name="Hamlin N."/>
            <person name="Holroyd S."/>
            <person name="Hornsby T."/>
            <person name="Jagels K."/>
            <person name="Krogh A."/>
            <person name="McLean J."/>
            <person name="Moule S."/>
            <person name="Murphy L.D."/>
            <person name="Oliver S."/>
            <person name="Osborne J."/>
            <person name="Quail M.A."/>
            <person name="Rajandream M.A."/>
            <person name="Rogers J."/>
            <person name="Rutter S."/>
            <person name="Seeger K."/>
            <person name="Skelton S."/>
            <person name="Squares S."/>
            <person name="Squares R."/>
            <person name="Sulston J.E."/>
            <person name="Taylor K."/>
            <person name="Whitehead S."/>
            <person name="Barrell B.G."/>
        </authorList>
    </citation>
    <scope>NUCLEOTIDE SEQUENCE [LARGE SCALE GENOMIC DNA]</scope>
    <source>
        <strain>ATCC 25618 / H37Rv</strain>
    </source>
</reference>
<reference key="2">
    <citation type="journal article" date="2011" name="Mol. Cell. Proteomics">
        <title>Proteogenomic analysis of Mycobacterium tuberculosis by high resolution mass spectrometry.</title>
        <authorList>
            <person name="Kelkar D.S."/>
            <person name="Kumar D."/>
            <person name="Kumar P."/>
            <person name="Balakrishnan L."/>
            <person name="Muthusamy B."/>
            <person name="Yadav A.K."/>
            <person name="Shrivastava P."/>
            <person name="Marimuthu A."/>
            <person name="Anand S."/>
            <person name="Sundaram H."/>
            <person name="Kingsbury R."/>
            <person name="Harsha H.C."/>
            <person name="Nair B."/>
            <person name="Prasad T.S."/>
            <person name="Chauhan D.S."/>
            <person name="Katoch K."/>
            <person name="Katoch V.M."/>
            <person name="Kumar P."/>
            <person name="Chaerkady R."/>
            <person name="Ramachandran S."/>
            <person name="Dash D."/>
            <person name="Pandey A."/>
        </authorList>
    </citation>
    <scope>IDENTIFICATION BY MASS SPECTROMETRY [LARGE SCALE ANALYSIS]</scope>
    <source>
        <strain>ATCC 25618 / H37Rv</strain>
    </source>
</reference>
<proteinExistence type="evidence at protein level"/>
<comment type="function">
    <text evidence="1">NDH-1 shuttles electrons from NADH, via FMN and iron-sulfur (Fe-S) centers, to quinones in the respiratory chain. The immediate electron acceptor for the enzyme in this species is believed to be a menaquinone. Couples the redox reaction to proton translocation (for every two electrons transferred, four hydrogen ions are translocated across the cytoplasmic membrane), and thus conserves the redox energy in a proton gradient.</text>
</comment>
<comment type="catalytic activity">
    <reaction evidence="1">
        <text>a quinone + NADH + 5 H(+)(in) = a quinol + NAD(+) + 4 H(+)(out)</text>
        <dbReference type="Rhea" id="RHEA:57888"/>
        <dbReference type="ChEBI" id="CHEBI:15378"/>
        <dbReference type="ChEBI" id="CHEBI:24646"/>
        <dbReference type="ChEBI" id="CHEBI:57540"/>
        <dbReference type="ChEBI" id="CHEBI:57945"/>
        <dbReference type="ChEBI" id="CHEBI:132124"/>
    </reaction>
</comment>
<comment type="subunit">
    <text evidence="1">NDH-1 is composed of 14 different subunits. Subunits NuoA, H, J, K, L, M, N constitute the membrane sector of the complex.</text>
</comment>
<comment type="subcellular location">
    <subcellularLocation>
        <location evidence="1">Cell membrane</location>
        <topology evidence="1">Multi-pass membrane protein</topology>
    </subcellularLocation>
</comment>
<comment type="similarity">
    <text evidence="1">Belongs to the complex I subunit 3 family.</text>
</comment>
<protein>
    <recommendedName>
        <fullName evidence="1">NADH-quinone oxidoreductase subunit A</fullName>
        <ecNumber evidence="1">7.1.1.-</ecNumber>
    </recommendedName>
    <alternativeName>
        <fullName evidence="1">NADH dehydrogenase I subunit A</fullName>
    </alternativeName>
    <alternativeName>
        <fullName evidence="1">NDH-1 subunit A</fullName>
    </alternativeName>
    <alternativeName>
        <fullName evidence="1">NUO1</fullName>
    </alternativeName>
</protein>
<accession>P9WIW7</accession>
<accession>L0TDA2</accession>
<accession>P65563</accession>
<accession>P95181</accession>
<keyword id="KW-1003">Cell membrane</keyword>
<keyword id="KW-0472">Membrane</keyword>
<keyword id="KW-0520">NAD</keyword>
<keyword id="KW-0874">Quinone</keyword>
<keyword id="KW-1185">Reference proteome</keyword>
<keyword id="KW-1278">Translocase</keyword>
<keyword id="KW-0812">Transmembrane</keyword>
<keyword id="KW-1133">Transmembrane helix</keyword>
<keyword id="KW-0813">Transport</keyword>
<name>NUOA_MYCTU</name>
<organism>
    <name type="scientific">Mycobacterium tuberculosis (strain ATCC 25618 / H37Rv)</name>
    <dbReference type="NCBI Taxonomy" id="83332"/>
    <lineage>
        <taxon>Bacteria</taxon>
        <taxon>Bacillati</taxon>
        <taxon>Actinomycetota</taxon>
        <taxon>Actinomycetes</taxon>
        <taxon>Mycobacteriales</taxon>
        <taxon>Mycobacteriaceae</taxon>
        <taxon>Mycobacterium</taxon>
        <taxon>Mycobacterium tuberculosis complex</taxon>
    </lineage>
</organism>